<feature type="chain" id="PRO_1000053884" description="Uridylate kinase">
    <location>
        <begin position="1"/>
        <end position="244"/>
    </location>
</feature>
<feature type="region of interest" description="Involved in allosteric activation by GTP" evidence="1">
    <location>
        <begin position="23"/>
        <end position="28"/>
    </location>
</feature>
<feature type="binding site" evidence="1">
    <location>
        <begin position="15"/>
        <end position="18"/>
    </location>
    <ligand>
        <name>ATP</name>
        <dbReference type="ChEBI" id="CHEBI:30616"/>
    </ligand>
</feature>
<feature type="binding site" evidence="1">
    <location>
        <position position="57"/>
    </location>
    <ligand>
        <name>UMP</name>
        <dbReference type="ChEBI" id="CHEBI:57865"/>
    </ligand>
</feature>
<feature type="binding site" evidence="1">
    <location>
        <position position="58"/>
    </location>
    <ligand>
        <name>ATP</name>
        <dbReference type="ChEBI" id="CHEBI:30616"/>
    </ligand>
</feature>
<feature type="binding site" evidence="1">
    <location>
        <position position="62"/>
    </location>
    <ligand>
        <name>ATP</name>
        <dbReference type="ChEBI" id="CHEBI:30616"/>
    </ligand>
</feature>
<feature type="binding site" evidence="1">
    <location>
        <position position="77"/>
    </location>
    <ligand>
        <name>UMP</name>
        <dbReference type="ChEBI" id="CHEBI:57865"/>
    </ligand>
</feature>
<feature type="binding site" evidence="1">
    <location>
        <begin position="138"/>
        <end position="145"/>
    </location>
    <ligand>
        <name>UMP</name>
        <dbReference type="ChEBI" id="CHEBI:57865"/>
    </ligand>
</feature>
<feature type="binding site" evidence="1">
    <location>
        <position position="165"/>
    </location>
    <ligand>
        <name>ATP</name>
        <dbReference type="ChEBI" id="CHEBI:30616"/>
    </ligand>
</feature>
<feature type="binding site" evidence="1">
    <location>
        <position position="171"/>
    </location>
    <ligand>
        <name>ATP</name>
        <dbReference type="ChEBI" id="CHEBI:30616"/>
    </ligand>
</feature>
<feature type="binding site" evidence="1">
    <location>
        <position position="174"/>
    </location>
    <ligand>
        <name>ATP</name>
        <dbReference type="ChEBI" id="CHEBI:30616"/>
    </ligand>
</feature>
<sequence length="244" mass="26288">MSTNPKPAYRRVLLKLSGEALQGSEGFGIDPAVLDRMAQEIKELVELGVQVGLVIGGGNLFRGAGLAKAGMNRVVGDHMGMLATVMNGLAMRDALHRAYVNARLMSAISLQGICDSYVWAEAISQLRAGKVVIFSAGTGNPFFTTDSAACLRGIEIEADVVLKATKVDGVFTDDPVKNPDAVLCHELSYDEVLEKELKVMDLAAFTLARDHDLPIRVFNMNKPGALRRVIMGEPEGTLIHHVSK</sequence>
<keyword id="KW-0021">Allosteric enzyme</keyword>
<keyword id="KW-0067">ATP-binding</keyword>
<keyword id="KW-0963">Cytoplasm</keyword>
<keyword id="KW-0418">Kinase</keyword>
<keyword id="KW-0547">Nucleotide-binding</keyword>
<keyword id="KW-0665">Pyrimidine biosynthesis</keyword>
<keyword id="KW-1185">Reference proteome</keyword>
<keyword id="KW-0808">Transferase</keyword>
<evidence type="ECO:0000255" key="1">
    <source>
        <dbReference type="HAMAP-Rule" id="MF_01220"/>
    </source>
</evidence>
<proteinExistence type="inferred from homology"/>
<reference key="1">
    <citation type="journal article" date="2006" name="J. Bacteriol.">
        <title>Genome sequence of Aeromonas hydrophila ATCC 7966T: jack of all trades.</title>
        <authorList>
            <person name="Seshadri R."/>
            <person name="Joseph S.W."/>
            <person name="Chopra A.K."/>
            <person name="Sha J."/>
            <person name="Shaw J."/>
            <person name="Graf J."/>
            <person name="Haft D.H."/>
            <person name="Wu M."/>
            <person name="Ren Q."/>
            <person name="Rosovitz M.J."/>
            <person name="Madupu R."/>
            <person name="Tallon L."/>
            <person name="Kim M."/>
            <person name="Jin S."/>
            <person name="Vuong H."/>
            <person name="Stine O.C."/>
            <person name="Ali A."/>
            <person name="Horneman A.J."/>
            <person name="Heidelberg J.F."/>
        </authorList>
    </citation>
    <scope>NUCLEOTIDE SEQUENCE [LARGE SCALE GENOMIC DNA]</scope>
    <source>
        <strain>ATCC 7966 / DSM 30187 / BCRC 13018 / CCUG 14551 / JCM 1027 / KCTC 2358 / NCIMB 9240 / NCTC 8049</strain>
    </source>
</reference>
<comment type="function">
    <text evidence="1">Catalyzes the reversible phosphorylation of UMP to UDP.</text>
</comment>
<comment type="catalytic activity">
    <reaction evidence="1">
        <text>UMP + ATP = UDP + ADP</text>
        <dbReference type="Rhea" id="RHEA:24400"/>
        <dbReference type="ChEBI" id="CHEBI:30616"/>
        <dbReference type="ChEBI" id="CHEBI:57865"/>
        <dbReference type="ChEBI" id="CHEBI:58223"/>
        <dbReference type="ChEBI" id="CHEBI:456216"/>
        <dbReference type="EC" id="2.7.4.22"/>
    </reaction>
</comment>
<comment type="activity regulation">
    <text evidence="1">Allosterically activated by GTP. Inhibited by UTP.</text>
</comment>
<comment type="pathway">
    <text evidence="1">Pyrimidine metabolism; CTP biosynthesis via de novo pathway; UDP from UMP (UMPK route): step 1/1.</text>
</comment>
<comment type="subunit">
    <text evidence="1">Homohexamer.</text>
</comment>
<comment type="subcellular location">
    <subcellularLocation>
        <location evidence="1">Cytoplasm</location>
    </subcellularLocation>
</comment>
<comment type="similarity">
    <text evidence="1">Belongs to the UMP kinase family.</text>
</comment>
<dbReference type="EC" id="2.7.4.22" evidence="1"/>
<dbReference type="EMBL" id="CP000462">
    <property type="protein sequence ID" value="ABK38593.1"/>
    <property type="molecule type" value="Genomic_DNA"/>
</dbReference>
<dbReference type="RefSeq" id="WP_011705095.1">
    <property type="nucleotide sequence ID" value="NC_008570.1"/>
</dbReference>
<dbReference type="RefSeq" id="YP_855716.1">
    <property type="nucleotide sequence ID" value="NC_008570.1"/>
</dbReference>
<dbReference type="SMR" id="A0KHG5"/>
<dbReference type="STRING" id="380703.AHA_1175"/>
<dbReference type="EnsemblBacteria" id="ABK38593">
    <property type="protein sequence ID" value="ABK38593"/>
    <property type="gene ID" value="AHA_1175"/>
</dbReference>
<dbReference type="GeneID" id="4489599"/>
<dbReference type="KEGG" id="aha:AHA_1175"/>
<dbReference type="PATRIC" id="fig|380703.7.peg.1182"/>
<dbReference type="eggNOG" id="COG0528">
    <property type="taxonomic scope" value="Bacteria"/>
</dbReference>
<dbReference type="HOGENOM" id="CLU_033861_0_0_6"/>
<dbReference type="OrthoDB" id="9807458at2"/>
<dbReference type="UniPathway" id="UPA00159">
    <property type="reaction ID" value="UER00275"/>
</dbReference>
<dbReference type="Proteomes" id="UP000000756">
    <property type="component" value="Chromosome"/>
</dbReference>
<dbReference type="GO" id="GO:0005829">
    <property type="term" value="C:cytosol"/>
    <property type="evidence" value="ECO:0007669"/>
    <property type="project" value="TreeGrafter"/>
</dbReference>
<dbReference type="GO" id="GO:0005524">
    <property type="term" value="F:ATP binding"/>
    <property type="evidence" value="ECO:0007669"/>
    <property type="project" value="UniProtKB-KW"/>
</dbReference>
<dbReference type="GO" id="GO:0033862">
    <property type="term" value="F:UMP kinase activity"/>
    <property type="evidence" value="ECO:0007669"/>
    <property type="project" value="UniProtKB-EC"/>
</dbReference>
<dbReference type="GO" id="GO:0044210">
    <property type="term" value="P:'de novo' CTP biosynthetic process"/>
    <property type="evidence" value="ECO:0007669"/>
    <property type="project" value="UniProtKB-UniRule"/>
</dbReference>
<dbReference type="GO" id="GO:0006225">
    <property type="term" value="P:UDP biosynthetic process"/>
    <property type="evidence" value="ECO:0007669"/>
    <property type="project" value="TreeGrafter"/>
</dbReference>
<dbReference type="CDD" id="cd04254">
    <property type="entry name" value="AAK_UMPK-PyrH-Ec"/>
    <property type="match status" value="1"/>
</dbReference>
<dbReference type="FunFam" id="3.40.1160.10:FF:000001">
    <property type="entry name" value="Uridylate kinase"/>
    <property type="match status" value="1"/>
</dbReference>
<dbReference type="Gene3D" id="3.40.1160.10">
    <property type="entry name" value="Acetylglutamate kinase-like"/>
    <property type="match status" value="1"/>
</dbReference>
<dbReference type="HAMAP" id="MF_01220_B">
    <property type="entry name" value="PyrH_B"/>
    <property type="match status" value="1"/>
</dbReference>
<dbReference type="InterPro" id="IPR036393">
    <property type="entry name" value="AceGlu_kinase-like_sf"/>
</dbReference>
<dbReference type="InterPro" id="IPR001048">
    <property type="entry name" value="Asp/Glu/Uridylate_kinase"/>
</dbReference>
<dbReference type="InterPro" id="IPR011817">
    <property type="entry name" value="Uridylate_kinase"/>
</dbReference>
<dbReference type="InterPro" id="IPR015963">
    <property type="entry name" value="Uridylate_kinase_bac"/>
</dbReference>
<dbReference type="NCBIfam" id="TIGR02075">
    <property type="entry name" value="pyrH_bact"/>
    <property type="match status" value="1"/>
</dbReference>
<dbReference type="PANTHER" id="PTHR42833">
    <property type="entry name" value="URIDYLATE KINASE"/>
    <property type="match status" value="1"/>
</dbReference>
<dbReference type="PANTHER" id="PTHR42833:SF4">
    <property type="entry name" value="URIDYLATE KINASE PUMPKIN, CHLOROPLASTIC"/>
    <property type="match status" value="1"/>
</dbReference>
<dbReference type="Pfam" id="PF00696">
    <property type="entry name" value="AA_kinase"/>
    <property type="match status" value="1"/>
</dbReference>
<dbReference type="PIRSF" id="PIRSF005650">
    <property type="entry name" value="Uridylate_kin"/>
    <property type="match status" value="1"/>
</dbReference>
<dbReference type="SUPFAM" id="SSF53633">
    <property type="entry name" value="Carbamate kinase-like"/>
    <property type="match status" value="1"/>
</dbReference>
<gene>
    <name evidence="1" type="primary">pyrH</name>
    <name type="ordered locus">AHA_1175</name>
</gene>
<accession>A0KHG5</accession>
<name>PYRH_AERHH</name>
<protein>
    <recommendedName>
        <fullName evidence="1">Uridylate kinase</fullName>
        <shortName evidence="1">UK</shortName>
        <ecNumber evidence="1">2.7.4.22</ecNumber>
    </recommendedName>
    <alternativeName>
        <fullName evidence="1">Uridine monophosphate kinase</fullName>
        <shortName evidence="1">UMP kinase</shortName>
        <shortName evidence="1">UMPK</shortName>
    </alternativeName>
</protein>
<organism>
    <name type="scientific">Aeromonas hydrophila subsp. hydrophila (strain ATCC 7966 / DSM 30187 / BCRC 13018 / CCUG 14551 / JCM 1027 / KCTC 2358 / NCIMB 9240 / NCTC 8049)</name>
    <dbReference type="NCBI Taxonomy" id="380703"/>
    <lineage>
        <taxon>Bacteria</taxon>
        <taxon>Pseudomonadati</taxon>
        <taxon>Pseudomonadota</taxon>
        <taxon>Gammaproteobacteria</taxon>
        <taxon>Aeromonadales</taxon>
        <taxon>Aeromonadaceae</taxon>
        <taxon>Aeromonas</taxon>
    </lineage>
</organism>